<sequence>MTLYDENNLHIIKDNLRYLKLLSKQYPSISSASSEIINLQAILNLPKGTEHFISDVHGEYESFTHMLKNASGVIKRKIDDVFGTSLRECDKKNLATLIYYPEQKLDLIKKSEKNLEDWYKITLYRLIRLCQIVSSKYTRSKVRKSLPSDFAYIIEELLNEQGDRVDKQEYYNSIIETIIDIDRASEFIIAISNVIQRLVVDKLHIIGDIYDRGPGAEIIIEALSKHHSIDIQWGNHDIVWMGAAAGCEACIANVIRISLRYANLSTLEDGYGINLLPLATFAMDFYKEDNCENFKPRTIDKNLNETDIKLLSKMHKAISIIQFKLEGKIIKRRPEFKMGERLLLDKINIKEGTLNLNEKIYKLIDTNFPTLDKENPYELNERERDLVEKLTNSFINSEKLQRHIKFLYSNGNLYLKYNSNLLYHGCIPLNEDGSLKEVTLCKETLKGKSLLDKLDRLAREAYFFKKDPESKLYGMDMMWYLWCGSNSPLFGKKKMTTFERYFLDDKNTHKEQKNPYYKYRNDEKMCTMIFEEFELDADNSHIINGHIPVKTKEGENPIKANGKLLVIDGGFCKAYQPQTGIAGYTLIYNSYGLLLTSHEPFSSIHKAIVEGNDILSSTTILEHVSSRKRVLDTDSGEEIKKQIHDLEMLLVAYRKGLIKEENEANIRF</sequence>
<gene>
    <name evidence="1" type="primary">fbp</name>
    <name type="ordered locus">CBO0516</name>
    <name type="ordered locus">CLC_0589</name>
</gene>
<feature type="chain" id="PRO_0000363083" description="Fructose-1,6-bisphosphatase class 3">
    <location>
        <begin position="1"/>
        <end position="668"/>
    </location>
</feature>
<reference key="1">
    <citation type="journal article" date="2007" name="Genome Res.">
        <title>Genome sequence of a proteolytic (Group I) Clostridium botulinum strain Hall A and comparative analysis of the clostridial genomes.</title>
        <authorList>
            <person name="Sebaihia M."/>
            <person name="Peck M.W."/>
            <person name="Minton N.P."/>
            <person name="Thomson N.R."/>
            <person name="Holden M.T.G."/>
            <person name="Mitchell W.J."/>
            <person name="Carter A.T."/>
            <person name="Bentley S.D."/>
            <person name="Mason D.R."/>
            <person name="Crossman L."/>
            <person name="Paul C.J."/>
            <person name="Ivens A."/>
            <person name="Wells-Bennik M.H.J."/>
            <person name="Davis I.J."/>
            <person name="Cerdeno-Tarraga A.M."/>
            <person name="Churcher C."/>
            <person name="Quail M.A."/>
            <person name="Chillingworth T."/>
            <person name="Feltwell T."/>
            <person name="Fraser A."/>
            <person name="Goodhead I."/>
            <person name="Hance Z."/>
            <person name="Jagels K."/>
            <person name="Larke N."/>
            <person name="Maddison M."/>
            <person name="Moule S."/>
            <person name="Mungall K."/>
            <person name="Norbertczak H."/>
            <person name="Rabbinowitsch E."/>
            <person name="Sanders M."/>
            <person name="Simmonds M."/>
            <person name="White B."/>
            <person name="Whithead S."/>
            <person name="Parkhill J."/>
        </authorList>
    </citation>
    <scope>NUCLEOTIDE SEQUENCE [LARGE SCALE GENOMIC DNA]</scope>
    <source>
        <strain>Hall / ATCC 3502 / NCTC 13319 / Type A</strain>
    </source>
</reference>
<reference key="2">
    <citation type="journal article" date="2007" name="PLoS ONE">
        <title>Analysis of the neurotoxin complex genes in Clostridium botulinum A1-A4 and B1 strains: BoNT/A3, /Ba4 and /B1 clusters are located within plasmids.</title>
        <authorList>
            <person name="Smith T.J."/>
            <person name="Hill K.K."/>
            <person name="Foley B.T."/>
            <person name="Detter J.C."/>
            <person name="Munk A.C."/>
            <person name="Bruce D.C."/>
            <person name="Doggett N.A."/>
            <person name="Smith L.A."/>
            <person name="Marks J.D."/>
            <person name="Xie G."/>
            <person name="Brettin T.S."/>
        </authorList>
    </citation>
    <scope>NUCLEOTIDE SEQUENCE [LARGE SCALE GENOMIC DNA]</scope>
    <source>
        <strain>Hall / ATCC 3502 / NCTC 13319 / Type A</strain>
    </source>
</reference>
<evidence type="ECO:0000255" key="1">
    <source>
        <dbReference type="HAMAP-Rule" id="MF_01854"/>
    </source>
</evidence>
<name>F16PC_CLOBH</name>
<keyword id="KW-0119">Carbohydrate metabolism</keyword>
<keyword id="KW-0378">Hydrolase</keyword>
<keyword id="KW-0464">Manganese</keyword>
<keyword id="KW-1185">Reference proteome</keyword>
<proteinExistence type="inferred from homology"/>
<comment type="catalytic activity">
    <reaction evidence="1">
        <text>beta-D-fructose 1,6-bisphosphate + H2O = beta-D-fructose 6-phosphate + phosphate</text>
        <dbReference type="Rhea" id="RHEA:11064"/>
        <dbReference type="ChEBI" id="CHEBI:15377"/>
        <dbReference type="ChEBI" id="CHEBI:32966"/>
        <dbReference type="ChEBI" id="CHEBI:43474"/>
        <dbReference type="ChEBI" id="CHEBI:57634"/>
        <dbReference type="EC" id="3.1.3.11"/>
    </reaction>
</comment>
<comment type="cofactor">
    <cofactor evidence="1">
        <name>Mn(2+)</name>
        <dbReference type="ChEBI" id="CHEBI:29035"/>
    </cofactor>
</comment>
<comment type="pathway">
    <text evidence="1">Carbohydrate biosynthesis; gluconeogenesis.</text>
</comment>
<comment type="similarity">
    <text evidence="1">Belongs to the FBPase class 3 family.</text>
</comment>
<accession>A5HZ60</accession>
<accession>A7FZS6</accession>
<protein>
    <recommendedName>
        <fullName evidence="1">Fructose-1,6-bisphosphatase class 3</fullName>
        <shortName evidence="1">FBPase class 3</shortName>
        <ecNumber evidence="1">3.1.3.11</ecNumber>
    </recommendedName>
    <alternativeName>
        <fullName evidence="1">D-fructose-1,6-bisphosphate 1-phosphohydrolase class 3</fullName>
    </alternativeName>
</protein>
<organism>
    <name type="scientific">Clostridium botulinum (strain Hall / ATCC 3502 / NCTC 13319 / Type A)</name>
    <dbReference type="NCBI Taxonomy" id="441771"/>
    <lineage>
        <taxon>Bacteria</taxon>
        <taxon>Bacillati</taxon>
        <taxon>Bacillota</taxon>
        <taxon>Clostridia</taxon>
        <taxon>Eubacteriales</taxon>
        <taxon>Clostridiaceae</taxon>
        <taxon>Clostridium</taxon>
    </lineage>
</organism>
<dbReference type="EC" id="3.1.3.11" evidence="1"/>
<dbReference type="EMBL" id="CP000727">
    <property type="protein sequence ID" value="ABS37392.1"/>
    <property type="molecule type" value="Genomic_DNA"/>
</dbReference>
<dbReference type="EMBL" id="AM412317">
    <property type="protein sequence ID" value="CAL82069.1"/>
    <property type="molecule type" value="Genomic_DNA"/>
</dbReference>
<dbReference type="RefSeq" id="WP_011948262.1">
    <property type="nucleotide sequence ID" value="NC_009698.1"/>
</dbReference>
<dbReference type="RefSeq" id="YP_001253059.1">
    <property type="nucleotide sequence ID" value="NC_009495.1"/>
</dbReference>
<dbReference type="RefSeq" id="YP_001386472.1">
    <property type="nucleotide sequence ID" value="NC_009698.1"/>
</dbReference>
<dbReference type="GeneID" id="5184771"/>
<dbReference type="KEGG" id="cbh:CLC_0589"/>
<dbReference type="KEGG" id="cbo:CBO0516"/>
<dbReference type="PATRIC" id="fig|413999.7.peg.518"/>
<dbReference type="HOGENOM" id="CLU_028392_2_0_9"/>
<dbReference type="UniPathway" id="UPA00138"/>
<dbReference type="PRO" id="PR:A5HZ60"/>
<dbReference type="Proteomes" id="UP000001986">
    <property type="component" value="Chromosome"/>
</dbReference>
<dbReference type="GO" id="GO:0042132">
    <property type="term" value="F:fructose 1,6-bisphosphate 1-phosphatase activity"/>
    <property type="evidence" value="ECO:0007669"/>
    <property type="project" value="UniProtKB-UniRule"/>
</dbReference>
<dbReference type="GO" id="GO:0006094">
    <property type="term" value="P:gluconeogenesis"/>
    <property type="evidence" value="ECO:0007669"/>
    <property type="project" value="UniProtKB-UniRule"/>
</dbReference>
<dbReference type="Gene3D" id="3.60.21.10">
    <property type="match status" value="1"/>
</dbReference>
<dbReference type="HAMAP" id="MF_01854">
    <property type="entry name" value="FBPase_class3"/>
    <property type="match status" value="1"/>
</dbReference>
<dbReference type="InterPro" id="IPR009164">
    <property type="entry name" value="FBPtase_class3"/>
</dbReference>
<dbReference type="InterPro" id="IPR029052">
    <property type="entry name" value="Metallo-depent_PP-like"/>
</dbReference>
<dbReference type="Pfam" id="PF06874">
    <property type="entry name" value="FBPase_2"/>
    <property type="match status" value="1"/>
</dbReference>
<dbReference type="PIRSF" id="PIRSF000906">
    <property type="entry name" value="FBPtase_Bacill"/>
    <property type="match status" value="1"/>
</dbReference>
<dbReference type="SUPFAM" id="SSF56300">
    <property type="entry name" value="Metallo-dependent phosphatases"/>
    <property type="match status" value="1"/>
</dbReference>